<keyword id="KW-1003">Cell membrane</keyword>
<keyword id="KW-1015">Disulfide bond</keyword>
<keyword id="KW-0297">G-protein coupled receptor</keyword>
<keyword id="KW-0325">Glycoprotein</keyword>
<keyword id="KW-0472">Membrane</keyword>
<keyword id="KW-0552">Olfaction</keyword>
<keyword id="KW-0675">Receptor</keyword>
<keyword id="KW-1185">Reference proteome</keyword>
<keyword id="KW-0716">Sensory transduction</keyword>
<keyword id="KW-0807">Transducer</keyword>
<keyword id="KW-0812">Transmembrane</keyword>
<keyword id="KW-1133">Transmembrane helix</keyword>
<name>O5H14_HUMAN</name>
<organism>
    <name type="scientific">Homo sapiens</name>
    <name type="common">Human</name>
    <dbReference type="NCBI Taxonomy" id="9606"/>
    <lineage>
        <taxon>Eukaryota</taxon>
        <taxon>Metazoa</taxon>
        <taxon>Chordata</taxon>
        <taxon>Craniata</taxon>
        <taxon>Vertebrata</taxon>
        <taxon>Euteleostomi</taxon>
        <taxon>Mammalia</taxon>
        <taxon>Eutheria</taxon>
        <taxon>Euarchontoglires</taxon>
        <taxon>Primates</taxon>
        <taxon>Haplorrhini</taxon>
        <taxon>Catarrhini</taxon>
        <taxon>Hominidae</taxon>
        <taxon>Homo</taxon>
    </lineage>
</organism>
<dbReference type="EMBL" id="AC117460">
    <property type="status" value="NOT_ANNOTATED_CDS"/>
    <property type="molecule type" value="Genomic_DNA"/>
</dbReference>
<dbReference type="EMBL" id="BC136984">
    <property type="protein sequence ID" value="AAI36985.1"/>
    <property type="molecule type" value="mRNA"/>
</dbReference>
<dbReference type="CCDS" id="CCDS33798.1"/>
<dbReference type="RefSeq" id="NP_001005514.1">
    <property type="nucleotide sequence ID" value="NM_001005514.2"/>
</dbReference>
<dbReference type="SMR" id="A6NHG9"/>
<dbReference type="FunCoup" id="A6NHG9">
    <property type="interactions" value="416"/>
</dbReference>
<dbReference type="STRING" id="9606.ENSP00000493226"/>
<dbReference type="GlyCosmos" id="A6NHG9">
    <property type="glycosylation" value="1 site, No reported glycans"/>
</dbReference>
<dbReference type="GlyGen" id="A6NHG9">
    <property type="glycosylation" value="1 site"/>
</dbReference>
<dbReference type="BioMuta" id="OR5H14"/>
<dbReference type="PaxDb" id="9606-ENSP00000401706"/>
<dbReference type="PeptideAtlas" id="A6NHG9"/>
<dbReference type="Antibodypedia" id="64920">
    <property type="antibodies" value="17 antibodies from 11 providers"/>
</dbReference>
<dbReference type="DNASU" id="403273"/>
<dbReference type="Ensembl" id="ENST00000437310.1">
    <property type="protein sequence ID" value="ENSP00000401706.1"/>
    <property type="gene ID" value="ENSG00000236032.3"/>
</dbReference>
<dbReference type="Ensembl" id="ENST00000641380.1">
    <property type="protein sequence ID" value="ENSP00000493226.1"/>
    <property type="gene ID" value="ENSG00000236032.3"/>
</dbReference>
<dbReference type="GeneID" id="403273"/>
<dbReference type="KEGG" id="hsa:403273"/>
<dbReference type="MANE-Select" id="ENST00000641380.1">
    <property type="protein sequence ID" value="ENSP00000493226.1"/>
    <property type="RefSeq nucleotide sequence ID" value="NM_001005514.2"/>
    <property type="RefSeq protein sequence ID" value="NP_001005514.1"/>
</dbReference>
<dbReference type="UCSC" id="uc003dsg.2">
    <property type="organism name" value="human"/>
</dbReference>
<dbReference type="AGR" id="HGNC:31286"/>
<dbReference type="CTD" id="403273"/>
<dbReference type="DisGeNET" id="403273"/>
<dbReference type="GeneCards" id="OR5H14"/>
<dbReference type="HGNC" id="HGNC:31286">
    <property type="gene designation" value="OR5H14"/>
</dbReference>
<dbReference type="HPA" id="ENSG00000236032">
    <property type="expression patterns" value="Not detected"/>
</dbReference>
<dbReference type="neXtProt" id="NX_A6NHG9"/>
<dbReference type="PharmGKB" id="PA134948167"/>
<dbReference type="VEuPathDB" id="HostDB:ENSG00000236032"/>
<dbReference type="eggNOG" id="ENOG502T9JQ">
    <property type="taxonomic scope" value="Eukaryota"/>
</dbReference>
<dbReference type="GeneTree" id="ENSGT01120000271834"/>
<dbReference type="HOGENOM" id="CLU_012526_1_2_1"/>
<dbReference type="InParanoid" id="A6NHG9"/>
<dbReference type="OMA" id="PLAFRYV"/>
<dbReference type="OrthoDB" id="9615015at2759"/>
<dbReference type="PAN-GO" id="A6NHG9">
    <property type="GO annotations" value="2 GO annotations based on evolutionary models"/>
</dbReference>
<dbReference type="PhylomeDB" id="A6NHG9"/>
<dbReference type="TreeFam" id="TF352737"/>
<dbReference type="PathwayCommons" id="A6NHG9"/>
<dbReference type="Reactome" id="R-HSA-9752946">
    <property type="pathway name" value="Expression and translocation of olfactory receptors"/>
</dbReference>
<dbReference type="BioGRID-ORCS" id="403273">
    <property type="hits" value="5 hits in 684 CRISPR screens"/>
</dbReference>
<dbReference type="GenomeRNAi" id="403273"/>
<dbReference type="Pharos" id="A6NHG9">
    <property type="development level" value="Tdark"/>
</dbReference>
<dbReference type="PRO" id="PR:A6NHG9"/>
<dbReference type="Proteomes" id="UP000005640">
    <property type="component" value="Chromosome 3"/>
</dbReference>
<dbReference type="RNAct" id="A6NHG9">
    <property type="molecule type" value="protein"/>
</dbReference>
<dbReference type="Bgee" id="ENSG00000236032">
    <property type="expression patterns" value="Expressed in placenta and 1 other cell type or tissue"/>
</dbReference>
<dbReference type="GO" id="GO:0005886">
    <property type="term" value="C:plasma membrane"/>
    <property type="evidence" value="ECO:0007669"/>
    <property type="project" value="UniProtKB-SubCell"/>
</dbReference>
<dbReference type="GO" id="GO:0004930">
    <property type="term" value="F:G protein-coupled receptor activity"/>
    <property type="evidence" value="ECO:0007669"/>
    <property type="project" value="UniProtKB-KW"/>
</dbReference>
<dbReference type="GO" id="GO:0005549">
    <property type="term" value="F:odorant binding"/>
    <property type="evidence" value="ECO:0000318"/>
    <property type="project" value="GO_Central"/>
</dbReference>
<dbReference type="GO" id="GO:0004984">
    <property type="term" value="F:olfactory receptor activity"/>
    <property type="evidence" value="ECO:0000318"/>
    <property type="project" value="GO_Central"/>
</dbReference>
<dbReference type="FunFam" id="1.10.1220.70:FF:000001">
    <property type="entry name" value="Olfactory receptor"/>
    <property type="match status" value="1"/>
</dbReference>
<dbReference type="FunFam" id="1.20.1070.10:FF:000004">
    <property type="entry name" value="Olfactory receptor"/>
    <property type="match status" value="1"/>
</dbReference>
<dbReference type="Gene3D" id="1.20.1070.10">
    <property type="entry name" value="Rhodopsin 7-helix transmembrane proteins"/>
    <property type="match status" value="1"/>
</dbReference>
<dbReference type="InterPro" id="IPR000276">
    <property type="entry name" value="GPCR_Rhodpsn"/>
</dbReference>
<dbReference type="InterPro" id="IPR017452">
    <property type="entry name" value="GPCR_Rhodpsn_7TM"/>
</dbReference>
<dbReference type="InterPro" id="IPR000725">
    <property type="entry name" value="Olfact_rcpt"/>
</dbReference>
<dbReference type="PANTHER" id="PTHR48018">
    <property type="entry name" value="OLFACTORY RECEPTOR"/>
    <property type="match status" value="1"/>
</dbReference>
<dbReference type="Pfam" id="PF13853">
    <property type="entry name" value="7tm_4"/>
    <property type="match status" value="1"/>
</dbReference>
<dbReference type="PRINTS" id="PR00237">
    <property type="entry name" value="GPCRRHODOPSN"/>
</dbReference>
<dbReference type="PRINTS" id="PR00245">
    <property type="entry name" value="OLFACTORYR"/>
</dbReference>
<dbReference type="SUPFAM" id="SSF81321">
    <property type="entry name" value="Family A G protein-coupled receptor-like"/>
    <property type="match status" value="1"/>
</dbReference>
<dbReference type="PROSITE" id="PS00237">
    <property type="entry name" value="G_PROTEIN_RECEP_F1_1"/>
    <property type="match status" value="1"/>
</dbReference>
<dbReference type="PROSITE" id="PS50262">
    <property type="entry name" value="G_PROTEIN_RECEP_F1_2"/>
    <property type="match status" value="1"/>
</dbReference>
<reference key="1">
    <citation type="journal article" date="2006" name="Nature">
        <title>The DNA sequence, annotation and analysis of human chromosome 3.</title>
        <authorList>
            <person name="Muzny D.M."/>
            <person name="Scherer S.E."/>
            <person name="Kaul R."/>
            <person name="Wang J."/>
            <person name="Yu J."/>
            <person name="Sudbrak R."/>
            <person name="Buhay C.J."/>
            <person name="Chen R."/>
            <person name="Cree A."/>
            <person name="Ding Y."/>
            <person name="Dugan-Rocha S."/>
            <person name="Gill R."/>
            <person name="Gunaratne P."/>
            <person name="Harris R.A."/>
            <person name="Hawes A.C."/>
            <person name="Hernandez J."/>
            <person name="Hodgson A.V."/>
            <person name="Hume J."/>
            <person name="Jackson A."/>
            <person name="Khan Z.M."/>
            <person name="Kovar-Smith C."/>
            <person name="Lewis L.R."/>
            <person name="Lozado R.J."/>
            <person name="Metzker M.L."/>
            <person name="Milosavljevic A."/>
            <person name="Miner G.R."/>
            <person name="Morgan M.B."/>
            <person name="Nazareth L.V."/>
            <person name="Scott G."/>
            <person name="Sodergren E."/>
            <person name="Song X.-Z."/>
            <person name="Steffen D."/>
            <person name="Wei S."/>
            <person name="Wheeler D.A."/>
            <person name="Wright M.W."/>
            <person name="Worley K.C."/>
            <person name="Yuan Y."/>
            <person name="Zhang Z."/>
            <person name="Adams C.Q."/>
            <person name="Ansari-Lari M.A."/>
            <person name="Ayele M."/>
            <person name="Brown M.J."/>
            <person name="Chen G."/>
            <person name="Chen Z."/>
            <person name="Clendenning J."/>
            <person name="Clerc-Blankenburg K.P."/>
            <person name="Chen R."/>
            <person name="Chen Z."/>
            <person name="Davis C."/>
            <person name="Delgado O."/>
            <person name="Dinh H.H."/>
            <person name="Dong W."/>
            <person name="Draper H."/>
            <person name="Ernst S."/>
            <person name="Fu G."/>
            <person name="Gonzalez-Garay M.L."/>
            <person name="Garcia D.K."/>
            <person name="Gillett W."/>
            <person name="Gu J."/>
            <person name="Hao B."/>
            <person name="Haugen E."/>
            <person name="Havlak P."/>
            <person name="He X."/>
            <person name="Hennig S."/>
            <person name="Hu S."/>
            <person name="Huang W."/>
            <person name="Jackson L.R."/>
            <person name="Jacob L.S."/>
            <person name="Kelly S.H."/>
            <person name="Kube M."/>
            <person name="Levy R."/>
            <person name="Li Z."/>
            <person name="Liu B."/>
            <person name="Liu J."/>
            <person name="Liu W."/>
            <person name="Lu J."/>
            <person name="Maheshwari M."/>
            <person name="Nguyen B.-V."/>
            <person name="Okwuonu G.O."/>
            <person name="Palmeiri A."/>
            <person name="Pasternak S."/>
            <person name="Perez L.M."/>
            <person name="Phelps K.A."/>
            <person name="Plopper F.J."/>
            <person name="Qiang B."/>
            <person name="Raymond C."/>
            <person name="Rodriguez R."/>
            <person name="Saenphimmachak C."/>
            <person name="Santibanez J."/>
            <person name="Shen H."/>
            <person name="Shen Y."/>
            <person name="Subramanian S."/>
            <person name="Tabor P.E."/>
            <person name="Verduzco D."/>
            <person name="Waldron L."/>
            <person name="Wang J."/>
            <person name="Wang J."/>
            <person name="Wang Q."/>
            <person name="Williams G.A."/>
            <person name="Wong G.K.-S."/>
            <person name="Yao Z."/>
            <person name="Zhang J."/>
            <person name="Zhang X."/>
            <person name="Zhao G."/>
            <person name="Zhou J."/>
            <person name="Zhou Y."/>
            <person name="Nelson D."/>
            <person name="Lehrach H."/>
            <person name="Reinhardt R."/>
            <person name="Naylor S.L."/>
            <person name="Yang H."/>
            <person name="Olson M."/>
            <person name="Weinstock G."/>
            <person name="Gibbs R.A."/>
        </authorList>
    </citation>
    <scope>NUCLEOTIDE SEQUENCE [LARGE SCALE GENOMIC DNA]</scope>
</reference>
<reference key="2">
    <citation type="journal article" date="2004" name="Genome Res.">
        <title>The status, quality, and expansion of the NIH full-length cDNA project: the Mammalian Gene Collection (MGC).</title>
        <authorList>
            <consortium name="The MGC Project Team"/>
        </authorList>
    </citation>
    <scope>NUCLEOTIDE SEQUENCE [LARGE SCALE MRNA]</scope>
    <source>
        <tissue>Testis</tissue>
    </source>
</reference>
<reference key="3">
    <citation type="journal article" date="2004" name="Proc. Natl. Acad. Sci. U.S.A.">
        <title>The human olfactory receptor gene family.</title>
        <authorList>
            <person name="Malnic B."/>
            <person name="Godfrey P.A."/>
            <person name="Buck L.B."/>
        </authorList>
    </citation>
    <scope>IDENTIFICATION</scope>
</reference>
<reference key="4">
    <citation type="journal article" date="2004" name="Proc. Natl. Acad. Sci. U.S.A.">
        <authorList>
            <person name="Malnic B."/>
            <person name="Godfrey P.A."/>
            <person name="Buck L.B."/>
        </authorList>
    </citation>
    <scope>ERRATUM OF PUBMED:14983052</scope>
</reference>
<accession>A6NHG9</accession>
<accession>B9EH15</accession>
<evidence type="ECO:0000255" key="1"/>
<evidence type="ECO:0000255" key="2">
    <source>
        <dbReference type="PROSITE-ProRule" id="PRU00521"/>
    </source>
</evidence>
<evidence type="ECO:0000305" key="3"/>
<gene>
    <name type="primary">OR5H14</name>
</gene>
<protein>
    <recommendedName>
        <fullName>Olfactory receptor 5H14</fullName>
    </recommendedName>
</protein>
<sequence length="310" mass="35099">MEEENATLLTEFVLTGFLYQPQWKIPLFLAFLVIYLITIMGNLGLIAVIWKDPHLHIPMYLLLGNLAFVDALLSSSVTLKMLINFLAKSKMISLSECKIQLFSFAISVTTECFLLATMAYDRYVAICKPLLYPAIMTNGLCIRLLILSYVGGLLHALIHEGFLFRLTFCNSNIIQHFYCDIIPLLKISYTDSSINFLMVFIFAGSIQVFTIGTVLISYIFVLYTILKKKSVKGMRKAFSTCGAHLLSVSLYYGPLAFMYMGSASPQADDQDMMESLFYTVIVPLLNPMIYSLRNKQVIASFTKMFKRNDV</sequence>
<feature type="chain" id="PRO_0000311997" description="Olfactory receptor 5H14">
    <location>
        <begin position="1"/>
        <end position="310"/>
    </location>
</feature>
<feature type="topological domain" description="Extracellular" evidence="1">
    <location>
        <begin position="1"/>
        <end position="28"/>
    </location>
</feature>
<feature type="transmembrane region" description="Helical; Name=1" evidence="1">
    <location>
        <begin position="29"/>
        <end position="49"/>
    </location>
</feature>
<feature type="topological domain" description="Cytoplasmic" evidence="1">
    <location>
        <begin position="50"/>
        <end position="56"/>
    </location>
</feature>
<feature type="transmembrane region" description="Helical; Name=2" evidence="1">
    <location>
        <begin position="57"/>
        <end position="77"/>
    </location>
</feature>
<feature type="topological domain" description="Extracellular" evidence="1">
    <location>
        <begin position="78"/>
        <end position="98"/>
    </location>
</feature>
<feature type="transmembrane region" description="Helical; Name=3" evidence="1">
    <location>
        <begin position="99"/>
        <end position="119"/>
    </location>
</feature>
<feature type="topological domain" description="Cytoplasmic" evidence="1">
    <location>
        <begin position="120"/>
        <end position="143"/>
    </location>
</feature>
<feature type="transmembrane region" description="Helical; Name=4" evidence="1">
    <location>
        <begin position="144"/>
        <end position="164"/>
    </location>
</feature>
<feature type="topological domain" description="Extracellular" evidence="1">
    <location>
        <begin position="165"/>
        <end position="195"/>
    </location>
</feature>
<feature type="transmembrane region" description="Helical; Name=5" evidence="1">
    <location>
        <begin position="196"/>
        <end position="216"/>
    </location>
</feature>
<feature type="topological domain" description="Cytoplasmic" evidence="1">
    <location>
        <begin position="217"/>
        <end position="240"/>
    </location>
</feature>
<feature type="transmembrane region" description="Helical; Name=6" evidence="1">
    <location>
        <begin position="241"/>
        <end position="261"/>
    </location>
</feature>
<feature type="topological domain" description="Extracellular" evidence="1">
    <location>
        <begin position="262"/>
        <end position="271"/>
    </location>
</feature>
<feature type="transmembrane region" description="Helical; Name=7" evidence="1">
    <location>
        <begin position="272"/>
        <end position="292"/>
    </location>
</feature>
<feature type="topological domain" description="Cytoplasmic" evidence="1">
    <location>
        <begin position="293"/>
        <end position="310"/>
    </location>
</feature>
<feature type="glycosylation site" description="N-linked (GlcNAc...) asparagine" evidence="1">
    <location>
        <position position="5"/>
    </location>
</feature>
<feature type="disulfide bond" evidence="2">
    <location>
        <begin position="97"/>
        <end position="179"/>
    </location>
</feature>
<feature type="sequence variant" id="VAR_037393" description="In dbSNP:rs4241468.">
    <original>G</original>
    <variation>R</variation>
    <location>
        <position position="64"/>
    </location>
</feature>
<feature type="sequence variant" id="VAR_037394" description="In dbSNP:rs4857076.">
    <original>Y</original>
    <variation>C</variation>
    <location>
        <position position="189"/>
    </location>
</feature>
<proteinExistence type="evidence at transcript level"/>
<comment type="function">
    <text evidence="3">Odorant receptor.</text>
</comment>
<comment type="subcellular location">
    <subcellularLocation>
        <location>Cell membrane</location>
        <topology>Multi-pass membrane protein</topology>
    </subcellularLocation>
</comment>
<comment type="similarity">
    <text evidence="2">Belongs to the G-protein coupled receptor 1 family.</text>
</comment>
<comment type="online information" name="Human Olfactory Receptor Data Exploratorium (HORDE)">
    <link uri="http://genome.weizmann.ac.il/horde/card/index/symbol:OR5H14"/>
</comment>